<evidence type="ECO:0000255" key="1">
    <source>
        <dbReference type="HAMAP-Rule" id="MF_01220"/>
    </source>
</evidence>
<accession>Q39W86</accession>
<proteinExistence type="inferred from homology"/>
<gene>
    <name evidence="1" type="primary">pyrH</name>
    <name type="ordered locus">Gmet_1252</name>
</gene>
<keyword id="KW-0021">Allosteric enzyme</keyword>
<keyword id="KW-0067">ATP-binding</keyword>
<keyword id="KW-0963">Cytoplasm</keyword>
<keyword id="KW-0418">Kinase</keyword>
<keyword id="KW-0547">Nucleotide-binding</keyword>
<keyword id="KW-0665">Pyrimidine biosynthesis</keyword>
<keyword id="KW-1185">Reference proteome</keyword>
<keyword id="KW-0808">Transferase</keyword>
<sequence length="239" mass="25533">MGTPYYKRVLLKLSGEALAGDQGYGIDPLTITTIAAEIKEVVASGAQLALVIGGGNIFRGLAASSKGMDRASADYMGMLATMINSLAMQDALEKIGVDTRVQSAIAMQEVAEPYIRRRAMRHLEKGRVVIFGAGTGNPYFTTDTAASLRAMEIGADVILKGTKVDGVYSADPKKDPTAQKYPRLTYLEVLKKGLQVMDATATSLCMDNNLPIIVFDITTYGNIKKVVCGEEIGTVVKGE</sequence>
<reference key="1">
    <citation type="journal article" date="2009" name="BMC Microbiol.">
        <title>The genome sequence of Geobacter metallireducens: features of metabolism, physiology and regulation common and dissimilar to Geobacter sulfurreducens.</title>
        <authorList>
            <person name="Aklujkar M."/>
            <person name="Krushkal J."/>
            <person name="DiBartolo G."/>
            <person name="Lapidus A."/>
            <person name="Land M.L."/>
            <person name="Lovley D.R."/>
        </authorList>
    </citation>
    <scope>NUCLEOTIDE SEQUENCE [LARGE SCALE GENOMIC DNA]</scope>
    <source>
        <strain>ATCC 53774 / DSM 7210 / GS-15</strain>
    </source>
</reference>
<protein>
    <recommendedName>
        <fullName evidence="1">Uridylate kinase</fullName>
        <shortName evidence="1">UK</shortName>
        <ecNumber evidence="1">2.7.4.22</ecNumber>
    </recommendedName>
    <alternativeName>
        <fullName evidence="1">Uridine monophosphate kinase</fullName>
        <shortName evidence="1">UMP kinase</shortName>
        <shortName evidence="1">UMPK</shortName>
    </alternativeName>
</protein>
<feature type="chain" id="PRO_1000073141" description="Uridylate kinase">
    <location>
        <begin position="1"/>
        <end position="239"/>
    </location>
</feature>
<feature type="region of interest" description="Involved in allosteric activation by GTP" evidence="1">
    <location>
        <begin position="20"/>
        <end position="25"/>
    </location>
</feature>
<feature type="binding site" evidence="1">
    <location>
        <begin position="12"/>
        <end position="15"/>
    </location>
    <ligand>
        <name>ATP</name>
        <dbReference type="ChEBI" id="CHEBI:30616"/>
    </ligand>
</feature>
<feature type="binding site" evidence="1">
    <location>
        <position position="54"/>
    </location>
    <ligand>
        <name>UMP</name>
        <dbReference type="ChEBI" id="CHEBI:57865"/>
    </ligand>
</feature>
<feature type="binding site" evidence="1">
    <location>
        <position position="55"/>
    </location>
    <ligand>
        <name>ATP</name>
        <dbReference type="ChEBI" id="CHEBI:30616"/>
    </ligand>
</feature>
<feature type="binding site" evidence="1">
    <location>
        <position position="59"/>
    </location>
    <ligand>
        <name>ATP</name>
        <dbReference type="ChEBI" id="CHEBI:30616"/>
    </ligand>
</feature>
<feature type="binding site" evidence="1">
    <location>
        <position position="74"/>
    </location>
    <ligand>
        <name>UMP</name>
        <dbReference type="ChEBI" id="CHEBI:57865"/>
    </ligand>
</feature>
<feature type="binding site" evidence="1">
    <location>
        <begin position="135"/>
        <end position="142"/>
    </location>
    <ligand>
        <name>UMP</name>
        <dbReference type="ChEBI" id="CHEBI:57865"/>
    </ligand>
</feature>
<feature type="binding site" evidence="1">
    <location>
        <position position="162"/>
    </location>
    <ligand>
        <name>ATP</name>
        <dbReference type="ChEBI" id="CHEBI:30616"/>
    </ligand>
</feature>
<feature type="binding site" evidence="1">
    <location>
        <position position="168"/>
    </location>
    <ligand>
        <name>ATP</name>
        <dbReference type="ChEBI" id="CHEBI:30616"/>
    </ligand>
</feature>
<feature type="binding site" evidence="1">
    <location>
        <position position="171"/>
    </location>
    <ligand>
        <name>ATP</name>
        <dbReference type="ChEBI" id="CHEBI:30616"/>
    </ligand>
</feature>
<organism>
    <name type="scientific">Geobacter metallireducens (strain ATCC 53774 / DSM 7210 / GS-15)</name>
    <dbReference type="NCBI Taxonomy" id="269799"/>
    <lineage>
        <taxon>Bacteria</taxon>
        <taxon>Pseudomonadati</taxon>
        <taxon>Thermodesulfobacteriota</taxon>
        <taxon>Desulfuromonadia</taxon>
        <taxon>Geobacterales</taxon>
        <taxon>Geobacteraceae</taxon>
        <taxon>Geobacter</taxon>
    </lineage>
</organism>
<name>PYRH_GEOMG</name>
<comment type="function">
    <text evidence="1">Catalyzes the reversible phosphorylation of UMP to UDP.</text>
</comment>
<comment type="catalytic activity">
    <reaction evidence="1">
        <text>UMP + ATP = UDP + ADP</text>
        <dbReference type="Rhea" id="RHEA:24400"/>
        <dbReference type="ChEBI" id="CHEBI:30616"/>
        <dbReference type="ChEBI" id="CHEBI:57865"/>
        <dbReference type="ChEBI" id="CHEBI:58223"/>
        <dbReference type="ChEBI" id="CHEBI:456216"/>
        <dbReference type="EC" id="2.7.4.22"/>
    </reaction>
</comment>
<comment type="activity regulation">
    <text evidence="1">Allosterically activated by GTP. Inhibited by UTP.</text>
</comment>
<comment type="pathway">
    <text evidence="1">Pyrimidine metabolism; CTP biosynthesis via de novo pathway; UDP from UMP (UMPK route): step 1/1.</text>
</comment>
<comment type="subunit">
    <text evidence="1">Homohexamer.</text>
</comment>
<comment type="subcellular location">
    <subcellularLocation>
        <location evidence="1">Cytoplasm</location>
    </subcellularLocation>
</comment>
<comment type="similarity">
    <text evidence="1">Belongs to the UMP kinase family.</text>
</comment>
<dbReference type="EC" id="2.7.4.22" evidence="1"/>
<dbReference type="EMBL" id="CP000148">
    <property type="protein sequence ID" value="ABB31488.1"/>
    <property type="molecule type" value="Genomic_DNA"/>
</dbReference>
<dbReference type="RefSeq" id="WP_004512115.1">
    <property type="nucleotide sequence ID" value="NC_007517.1"/>
</dbReference>
<dbReference type="SMR" id="Q39W86"/>
<dbReference type="STRING" id="269799.Gmet_1252"/>
<dbReference type="KEGG" id="gme:Gmet_1252"/>
<dbReference type="eggNOG" id="COG0528">
    <property type="taxonomic scope" value="Bacteria"/>
</dbReference>
<dbReference type="HOGENOM" id="CLU_033861_0_0_7"/>
<dbReference type="UniPathway" id="UPA00159">
    <property type="reaction ID" value="UER00275"/>
</dbReference>
<dbReference type="Proteomes" id="UP000007073">
    <property type="component" value="Chromosome"/>
</dbReference>
<dbReference type="GO" id="GO:0005829">
    <property type="term" value="C:cytosol"/>
    <property type="evidence" value="ECO:0007669"/>
    <property type="project" value="TreeGrafter"/>
</dbReference>
<dbReference type="GO" id="GO:0005524">
    <property type="term" value="F:ATP binding"/>
    <property type="evidence" value="ECO:0007669"/>
    <property type="project" value="UniProtKB-KW"/>
</dbReference>
<dbReference type="GO" id="GO:0033862">
    <property type="term" value="F:UMP kinase activity"/>
    <property type="evidence" value="ECO:0007669"/>
    <property type="project" value="UniProtKB-EC"/>
</dbReference>
<dbReference type="GO" id="GO:0044210">
    <property type="term" value="P:'de novo' CTP biosynthetic process"/>
    <property type="evidence" value="ECO:0007669"/>
    <property type="project" value="UniProtKB-UniRule"/>
</dbReference>
<dbReference type="GO" id="GO:0006225">
    <property type="term" value="P:UDP biosynthetic process"/>
    <property type="evidence" value="ECO:0007669"/>
    <property type="project" value="TreeGrafter"/>
</dbReference>
<dbReference type="CDD" id="cd04254">
    <property type="entry name" value="AAK_UMPK-PyrH-Ec"/>
    <property type="match status" value="1"/>
</dbReference>
<dbReference type="FunFam" id="3.40.1160.10:FF:000001">
    <property type="entry name" value="Uridylate kinase"/>
    <property type="match status" value="1"/>
</dbReference>
<dbReference type="Gene3D" id="3.40.1160.10">
    <property type="entry name" value="Acetylglutamate kinase-like"/>
    <property type="match status" value="1"/>
</dbReference>
<dbReference type="HAMAP" id="MF_01220_B">
    <property type="entry name" value="PyrH_B"/>
    <property type="match status" value="1"/>
</dbReference>
<dbReference type="InterPro" id="IPR036393">
    <property type="entry name" value="AceGlu_kinase-like_sf"/>
</dbReference>
<dbReference type="InterPro" id="IPR001048">
    <property type="entry name" value="Asp/Glu/Uridylate_kinase"/>
</dbReference>
<dbReference type="InterPro" id="IPR011817">
    <property type="entry name" value="Uridylate_kinase"/>
</dbReference>
<dbReference type="InterPro" id="IPR015963">
    <property type="entry name" value="Uridylate_kinase_bac"/>
</dbReference>
<dbReference type="NCBIfam" id="TIGR02075">
    <property type="entry name" value="pyrH_bact"/>
    <property type="match status" value="1"/>
</dbReference>
<dbReference type="PANTHER" id="PTHR42833">
    <property type="entry name" value="URIDYLATE KINASE"/>
    <property type="match status" value="1"/>
</dbReference>
<dbReference type="PANTHER" id="PTHR42833:SF4">
    <property type="entry name" value="URIDYLATE KINASE PUMPKIN, CHLOROPLASTIC"/>
    <property type="match status" value="1"/>
</dbReference>
<dbReference type="Pfam" id="PF00696">
    <property type="entry name" value="AA_kinase"/>
    <property type="match status" value="1"/>
</dbReference>
<dbReference type="PIRSF" id="PIRSF005650">
    <property type="entry name" value="Uridylate_kin"/>
    <property type="match status" value="1"/>
</dbReference>
<dbReference type="SUPFAM" id="SSF53633">
    <property type="entry name" value="Carbamate kinase-like"/>
    <property type="match status" value="1"/>
</dbReference>